<sequence length="522" mass="58856">MTKLTDEVKKRRTFAIISHPDAGKTTITEQMLLFGGVIRSAGTVKARKSGHYATSDWMAIEKKRGISVTSSVMQFEYQGKRINILDTPGHQDFSEDTYRTLMAVDAAVMVIDSAKGIEPQTKKLFKVVKKRGIPIFTFMNKLDRDGREPLDLIAELEDLLGIEGVAMNWPIGMGKQLKGLYDIANNRVELYRKDDDDRYLPLDKNGKLAEDEPLAQDSLYQSTLDDIDLLKEAGNTFDKEKILKGDQTPVFFGSALTNFGVETFLDSFVNLAPAPQEHIVNGDEKLAADDPEFSGFVFKIQANMNPNHRDRIAFVRIGSGEFKKGIDVTLARTGKPVRLNNATEFMSSERVQVSDAVAGDIVGLYDTGNFQIGDSIYAGKKKIVYPALPQFTPEIFMRVTAKNVMKQKSFHKGMNQLVQEGAIQLYRGYSTDDYILGAVGQLQFEVFSFRMKNEYNSEVELHTLGNRVARWINPDQLDPKMSSSRNLLVKDRDGEPLFLFENAFAERWFKDKYPDVELTSRL</sequence>
<evidence type="ECO:0000255" key="1">
    <source>
        <dbReference type="HAMAP-Rule" id="MF_00072"/>
    </source>
</evidence>
<name>RF3_LACGA</name>
<proteinExistence type="inferred from homology"/>
<comment type="function">
    <text evidence="1">Increases the formation of ribosomal termination complexes and stimulates activities of RF-1 and RF-2. It binds guanine nucleotides and has strong preference for UGA stop codons. It may interact directly with the ribosome. The stimulation of RF-1 and RF-2 is significantly reduced by GTP and GDP, but not by GMP.</text>
</comment>
<comment type="subcellular location">
    <subcellularLocation>
        <location evidence="1">Cytoplasm</location>
    </subcellularLocation>
</comment>
<comment type="similarity">
    <text evidence="1">Belongs to the TRAFAC class translation factor GTPase superfamily. Classic translation factor GTPase family. PrfC subfamily.</text>
</comment>
<feature type="chain" id="PRO_1000023655" description="Peptide chain release factor 3">
    <location>
        <begin position="1"/>
        <end position="522"/>
    </location>
</feature>
<feature type="domain" description="tr-type G">
    <location>
        <begin position="9"/>
        <end position="276"/>
    </location>
</feature>
<feature type="binding site" evidence="1">
    <location>
        <begin position="18"/>
        <end position="25"/>
    </location>
    <ligand>
        <name>GTP</name>
        <dbReference type="ChEBI" id="CHEBI:37565"/>
    </ligand>
</feature>
<feature type="binding site" evidence="1">
    <location>
        <begin position="86"/>
        <end position="90"/>
    </location>
    <ligand>
        <name>GTP</name>
        <dbReference type="ChEBI" id="CHEBI:37565"/>
    </ligand>
</feature>
<feature type="binding site" evidence="1">
    <location>
        <begin position="140"/>
        <end position="143"/>
    </location>
    <ligand>
        <name>GTP</name>
        <dbReference type="ChEBI" id="CHEBI:37565"/>
    </ligand>
</feature>
<dbReference type="EMBL" id="CP000413">
    <property type="protein sequence ID" value="ABJ60727.1"/>
    <property type="molecule type" value="Genomic_DNA"/>
</dbReference>
<dbReference type="RefSeq" id="WP_003646957.1">
    <property type="nucleotide sequence ID" value="NZ_WBMG01000003.1"/>
</dbReference>
<dbReference type="SMR" id="Q041Z5"/>
<dbReference type="GeneID" id="29638640"/>
<dbReference type="KEGG" id="lga:LGAS_1365"/>
<dbReference type="HOGENOM" id="CLU_002794_2_1_9"/>
<dbReference type="BioCyc" id="LGAS324831:G1G6Y-1359-MONOMER"/>
<dbReference type="Proteomes" id="UP000000664">
    <property type="component" value="Chromosome"/>
</dbReference>
<dbReference type="GO" id="GO:0005829">
    <property type="term" value="C:cytosol"/>
    <property type="evidence" value="ECO:0007669"/>
    <property type="project" value="TreeGrafter"/>
</dbReference>
<dbReference type="GO" id="GO:0005525">
    <property type="term" value="F:GTP binding"/>
    <property type="evidence" value="ECO:0007669"/>
    <property type="project" value="UniProtKB-UniRule"/>
</dbReference>
<dbReference type="GO" id="GO:0003924">
    <property type="term" value="F:GTPase activity"/>
    <property type="evidence" value="ECO:0007669"/>
    <property type="project" value="InterPro"/>
</dbReference>
<dbReference type="GO" id="GO:0016150">
    <property type="term" value="F:translation release factor activity, codon nonspecific"/>
    <property type="evidence" value="ECO:0007669"/>
    <property type="project" value="TreeGrafter"/>
</dbReference>
<dbReference type="GO" id="GO:0016149">
    <property type="term" value="F:translation release factor activity, codon specific"/>
    <property type="evidence" value="ECO:0007669"/>
    <property type="project" value="UniProtKB-UniRule"/>
</dbReference>
<dbReference type="GO" id="GO:0006449">
    <property type="term" value="P:regulation of translational termination"/>
    <property type="evidence" value="ECO:0007669"/>
    <property type="project" value="UniProtKB-UniRule"/>
</dbReference>
<dbReference type="CDD" id="cd04169">
    <property type="entry name" value="RF3"/>
    <property type="match status" value="1"/>
</dbReference>
<dbReference type="CDD" id="cd16259">
    <property type="entry name" value="RF3_III"/>
    <property type="match status" value="1"/>
</dbReference>
<dbReference type="FunFam" id="3.30.70.3280:FF:000001">
    <property type="entry name" value="Peptide chain release factor 3"/>
    <property type="match status" value="1"/>
</dbReference>
<dbReference type="FunFam" id="3.40.50.300:FF:000542">
    <property type="entry name" value="Peptide chain release factor 3"/>
    <property type="match status" value="1"/>
</dbReference>
<dbReference type="Gene3D" id="3.40.50.300">
    <property type="entry name" value="P-loop containing nucleotide triphosphate hydrolases"/>
    <property type="match status" value="1"/>
</dbReference>
<dbReference type="Gene3D" id="3.30.70.3280">
    <property type="entry name" value="Peptide chain release factor 3, domain III"/>
    <property type="match status" value="1"/>
</dbReference>
<dbReference type="Gene3D" id="2.40.30.10">
    <property type="entry name" value="Translation factors"/>
    <property type="match status" value="1"/>
</dbReference>
<dbReference type="HAMAP" id="MF_00072">
    <property type="entry name" value="Rel_fac_3"/>
    <property type="match status" value="1"/>
</dbReference>
<dbReference type="InterPro" id="IPR053905">
    <property type="entry name" value="EF-G-like_DII"/>
</dbReference>
<dbReference type="InterPro" id="IPR035647">
    <property type="entry name" value="EFG_III/V"/>
</dbReference>
<dbReference type="InterPro" id="IPR031157">
    <property type="entry name" value="G_TR_CS"/>
</dbReference>
<dbReference type="InterPro" id="IPR027417">
    <property type="entry name" value="P-loop_NTPase"/>
</dbReference>
<dbReference type="InterPro" id="IPR004548">
    <property type="entry name" value="PrfC"/>
</dbReference>
<dbReference type="InterPro" id="IPR032090">
    <property type="entry name" value="RF3_C"/>
</dbReference>
<dbReference type="InterPro" id="IPR038467">
    <property type="entry name" value="RF3_dom_3_sf"/>
</dbReference>
<dbReference type="InterPro" id="IPR041732">
    <property type="entry name" value="RF3_GTP-bd"/>
</dbReference>
<dbReference type="InterPro" id="IPR005225">
    <property type="entry name" value="Small_GTP-bd"/>
</dbReference>
<dbReference type="InterPro" id="IPR000795">
    <property type="entry name" value="T_Tr_GTP-bd_dom"/>
</dbReference>
<dbReference type="InterPro" id="IPR009000">
    <property type="entry name" value="Transl_B-barrel_sf"/>
</dbReference>
<dbReference type="NCBIfam" id="TIGR00503">
    <property type="entry name" value="prfC"/>
    <property type="match status" value="1"/>
</dbReference>
<dbReference type="NCBIfam" id="NF001964">
    <property type="entry name" value="PRK00741.1"/>
    <property type="match status" value="1"/>
</dbReference>
<dbReference type="NCBIfam" id="TIGR00231">
    <property type="entry name" value="small_GTP"/>
    <property type="match status" value="1"/>
</dbReference>
<dbReference type="PANTHER" id="PTHR43556">
    <property type="entry name" value="PEPTIDE CHAIN RELEASE FACTOR RF3"/>
    <property type="match status" value="1"/>
</dbReference>
<dbReference type="PANTHER" id="PTHR43556:SF2">
    <property type="entry name" value="PEPTIDE CHAIN RELEASE FACTOR RF3"/>
    <property type="match status" value="1"/>
</dbReference>
<dbReference type="Pfam" id="PF22042">
    <property type="entry name" value="EF-G_D2"/>
    <property type="match status" value="1"/>
</dbReference>
<dbReference type="Pfam" id="PF00009">
    <property type="entry name" value="GTP_EFTU"/>
    <property type="match status" value="1"/>
</dbReference>
<dbReference type="Pfam" id="PF16658">
    <property type="entry name" value="RF3_C"/>
    <property type="match status" value="1"/>
</dbReference>
<dbReference type="PRINTS" id="PR00315">
    <property type="entry name" value="ELONGATNFCT"/>
</dbReference>
<dbReference type="SUPFAM" id="SSF54980">
    <property type="entry name" value="EF-G C-terminal domain-like"/>
    <property type="match status" value="1"/>
</dbReference>
<dbReference type="SUPFAM" id="SSF52540">
    <property type="entry name" value="P-loop containing nucleoside triphosphate hydrolases"/>
    <property type="match status" value="1"/>
</dbReference>
<dbReference type="SUPFAM" id="SSF50447">
    <property type="entry name" value="Translation proteins"/>
    <property type="match status" value="1"/>
</dbReference>
<dbReference type="PROSITE" id="PS00301">
    <property type="entry name" value="G_TR_1"/>
    <property type="match status" value="1"/>
</dbReference>
<dbReference type="PROSITE" id="PS51722">
    <property type="entry name" value="G_TR_2"/>
    <property type="match status" value="1"/>
</dbReference>
<protein>
    <recommendedName>
        <fullName evidence="1">Peptide chain release factor 3</fullName>
        <shortName evidence="1">RF-3</shortName>
    </recommendedName>
</protein>
<keyword id="KW-0963">Cytoplasm</keyword>
<keyword id="KW-0342">GTP-binding</keyword>
<keyword id="KW-0547">Nucleotide-binding</keyword>
<keyword id="KW-0648">Protein biosynthesis</keyword>
<reference key="1">
    <citation type="journal article" date="2006" name="Proc. Natl. Acad. Sci. U.S.A.">
        <title>Comparative genomics of the lactic acid bacteria.</title>
        <authorList>
            <person name="Makarova K.S."/>
            <person name="Slesarev A."/>
            <person name="Wolf Y.I."/>
            <person name="Sorokin A."/>
            <person name="Mirkin B."/>
            <person name="Koonin E.V."/>
            <person name="Pavlov A."/>
            <person name="Pavlova N."/>
            <person name="Karamychev V."/>
            <person name="Polouchine N."/>
            <person name="Shakhova V."/>
            <person name="Grigoriev I."/>
            <person name="Lou Y."/>
            <person name="Rohksar D."/>
            <person name="Lucas S."/>
            <person name="Huang K."/>
            <person name="Goodstein D.M."/>
            <person name="Hawkins T."/>
            <person name="Plengvidhya V."/>
            <person name="Welker D."/>
            <person name="Hughes J."/>
            <person name="Goh Y."/>
            <person name="Benson A."/>
            <person name="Baldwin K."/>
            <person name="Lee J.-H."/>
            <person name="Diaz-Muniz I."/>
            <person name="Dosti B."/>
            <person name="Smeianov V."/>
            <person name="Wechter W."/>
            <person name="Barabote R."/>
            <person name="Lorca G."/>
            <person name="Altermann E."/>
            <person name="Barrangou R."/>
            <person name="Ganesan B."/>
            <person name="Xie Y."/>
            <person name="Rawsthorne H."/>
            <person name="Tamir D."/>
            <person name="Parker C."/>
            <person name="Breidt F."/>
            <person name="Broadbent J.R."/>
            <person name="Hutkins R."/>
            <person name="O'Sullivan D."/>
            <person name="Steele J."/>
            <person name="Unlu G."/>
            <person name="Saier M.H. Jr."/>
            <person name="Klaenhammer T."/>
            <person name="Richardson P."/>
            <person name="Kozyavkin S."/>
            <person name="Weimer B.C."/>
            <person name="Mills D.A."/>
        </authorList>
    </citation>
    <scope>NUCLEOTIDE SEQUENCE [LARGE SCALE GENOMIC DNA]</scope>
    <source>
        <strain>ATCC 33323 / DSM 20243 / BCRC 14619 / CIP 102991 / JCM 1131 / KCTC 3163 / NCIMB 11718 / NCTC 13722 / AM63</strain>
    </source>
</reference>
<organism>
    <name type="scientific">Lactobacillus gasseri (strain ATCC 33323 / DSM 20243 / BCRC 14619 / CIP 102991 / JCM 1131 / KCTC 3163 / NCIMB 11718 / NCTC 13722 / AM63)</name>
    <dbReference type="NCBI Taxonomy" id="324831"/>
    <lineage>
        <taxon>Bacteria</taxon>
        <taxon>Bacillati</taxon>
        <taxon>Bacillota</taxon>
        <taxon>Bacilli</taxon>
        <taxon>Lactobacillales</taxon>
        <taxon>Lactobacillaceae</taxon>
        <taxon>Lactobacillus</taxon>
    </lineage>
</organism>
<gene>
    <name evidence="1" type="primary">prfC</name>
    <name type="ordered locus">LGAS_1365</name>
</gene>
<accession>Q041Z5</accession>